<accession>Q2K3H0</accession>
<comment type="function">
    <text evidence="1">Produces ATP from ADP in the presence of a proton gradient across the membrane. The catalytic sites are hosted primarily by the beta subunits.</text>
</comment>
<comment type="catalytic activity">
    <reaction evidence="1">
        <text>ATP + H2O + 4 H(+)(in) = ADP + phosphate + 5 H(+)(out)</text>
        <dbReference type="Rhea" id="RHEA:57720"/>
        <dbReference type="ChEBI" id="CHEBI:15377"/>
        <dbReference type="ChEBI" id="CHEBI:15378"/>
        <dbReference type="ChEBI" id="CHEBI:30616"/>
        <dbReference type="ChEBI" id="CHEBI:43474"/>
        <dbReference type="ChEBI" id="CHEBI:456216"/>
        <dbReference type="EC" id="7.1.2.2"/>
    </reaction>
</comment>
<comment type="subunit">
    <text evidence="1">F-type ATPases have 2 components, CF(1) - the catalytic core - and CF(0) - the membrane proton channel. CF(1) has five subunits: alpha(3), beta(3), gamma(1), delta(1), epsilon(1). CF(0) has three main subunits: a(1), b(2) and c(9-12). The alpha and beta chains form an alternating ring which encloses part of the gamma chain. CF(1) is attached to CF(0) by a central stalk formed by the gamma and epsilon chains, while a peripheral stalk is formed by the delta and b chains.</text>
</comment>
<comment type="subcellular location">
    <subcellularLocation>
        <location evidence="1">Cell inner membrane</location>
        <topology evidence="1">Peripheral membrane protein</topology>
    </subcellularLocation>
</comment>
<comment type="similarity">
    <text evidence="1">Belongs to the ATPase alpha/beta chains family.</text>
</comment>
<organism>
    <name type="scientific">Rhizobium etli (strain ATCC 51251 / DSM 11541 / JCM 21823 / NBRC 15573 / CFN 42)</name>
    <dbReference type="NCBI Taxonomy" id="347834"/>
    <lineage>
        <taxon>Bacteria</taxon>
        <taxon>Pseudomonadati</taxon>
        <taxon>Pseudomonadota</taxon>
        <taxon>Alphaproteobacteria</taxon>
        <taxon>Hyphomicrobiales</taxon>
        <taxon>Rhizobiaceae</taxon>
        <taxon>Rhizobium/Agrobacterium group</taxon>
        <taxon>Rhizobium</taxon>
    </lineage>
</organism>
<protein>
    <recommendedName>
        <fullName evidence="1">ATP synthase subunit beta</fullName>
        <ecNumber evidence="1">7.1.2.2</ecNumber>
    </recommendedName>
    <alternativeName>
        <fullName evidence="1">ATP synthase F1 sector subunit beta</fullName>
    </alternativeName>
    <alternativeName>
        <fullName evidence="1">F-ATPase subunit beta</fullName>
    </alternativeName>
</protein>
<sequence>MAEAATRSVGKVTQVIGAVVDVAFEGELPAILNALETDNNGNRLVLEVAQHLGENEVRTIAMDSSEGLVRGQQVIDTGAPISVPVGDETLGRIMNVIGEPVDEAGPLNTAHKRAIHQDAPAYVEQSTEAQILVTGIKVVDLLAPYAKGGKIGLFGGAGVGKTVLIMELINNVAKAHGGYSVFAGVGERTREGNDLYHEMIESGVNKHGGGEGSKAALVYGQMNEPPGARARVALTGLTVAEHFRDQGQDVLFFVDNIFRFTQAGSEVSALLGRIPSAVGYQPTLATDMGQMQERITTTTTGSITSVQAIYVPADDLTDPAPATSFAHLDATTVLSRSIAEKGIYPAVDPLDSTSRMLDPMVVGEEHYEVARKVQSTLQRYKALQDIIAILGMDELSEEDKLAVARARKIERFLSQPFFVAEVFTGSPGKLVALEDTIKGFKGLVNGEYDNLPEAAFYMVGSMDEAIEKAKKLAAA</sequence>
<proteinExistence type="inferred from homology"/>
<dbReference type="EC" id="7.1.2.2" evidence="1"/>
<dbReference type="EMBL" id="CP000133">
    <property type="protein sequence ID" value="ABC92616.1"/>
    <property type="molecule type" value="Genomic_DNA"/>
</dbReference>
<dbReference type="RefSeq" id="WP_011427065.1">
    <property type="nucleotide sequence ID" value="NC_007761.1"/>
</dbReference>
<dbReference type="SMR" id="Q2K3H0"/>
<dbReference type="KEGG" id="ret:RHE_CH03870"/>
<dbReference type="eggNOG" id="COG0055">
    <property type="taxonomic scope" value="Bacteria"/>
</dbReference>
<dbReference type="HOGENOM" id="CLU_022398_0_2_5"/>
<dbReference type="OrthoDB" id="9801639at2"/>
<dbReference type="Proteomes" id="UP000001936">
    <property type="component" value="Chromosome"/>
</dbReference>
<dbReference type="GO" id="GO:0005886">
    <property type="term" value="C:plasma membrane"/>
    <property type="evidence" value="ECO:0007669"/>
    <property type="project" value="UniProtKB-SubCell"/>
</dbReference>
<dbReference type="GO" id="GO:0045259">
    <property type="term" value="C:proton-transporting ATP synthase complex"/>
    <property type="evidence" value="ECO:0007669"/>
    <property type="project" value="UniProtKB-KW"/>
</dbReference>
<dbReference type="GO" id="GO:0005524">
    <property type="term" value="F:ATP binding"/>
    <property type="evidence" value="ECO:0007669"/>
    <property type="project" value="UniProtKB-UniRule"/>
</dbReference>
<dbReference type="GO" id="GO:0016887">
    <property type="term" value="F:ATP hydrolysis activity"/>
    <property type="evidence" value="ECO:0007669"/>
    <property type="project" value="InterPro"/>
</dbReference>
<dbReference type="GO" id="GO:0046933">
    <property type="term" value="F:proton-transporting ATP synthase activity, rotational mechanism"/>
    <property type="evidence" value="ECO:0007669"/>
    <property type="project" value="UniProtKB-UniRule"/>
</dbReference>
<dbReference type="CDD" id="cd18110">
    <property type="entry name" value="ATP-synt_F1_beta_C"/>
    <property type="match status" value="1"/>
</dbReference>
<dbReference type="CDD" id="cd18115">
    <property type="entry name" value="ATP-synt_F1_beta_N"/>
    <property type="match status" value="1"/>
</dbReference>
<dbReference type="CDD" id="cd01133">
    <property type="entry name" value="F1-ATPase_beta_CD"/>
    <property type="match status" value="1"/>
</dbReference>
<dbReference type="FunFam" id="1.10.1140.10:FF:000001">
    <property type="entry name" value="ATP synthase subunit beta"/>
    <property type="match status" value="1"/>
</dbReference>
<dbReference type="FunFam" id="2.40.10.170:FF:000005">
    <property type="entry name" value="ATP synthase subunit beta"/>
    <property type="match status" value="1"/>
</dbReference>
<dbReference type="FunFam" id="3.40.50.300:FF:000026">
    <property type="entry name" value="ATP synthase subunit beta"/>
    <property type="match status" value="1"/>
</dbReference>
<dbReference type="Gene3D" id="2.40.10.170">
    <property type="match status" value="1"/>
</dbReference>
<dbReference type="Gene3D" id="1.10.1140.10">
    <property type="entry name" value="Bovine Mitochondrial F1-atpase, Atp Synthase Beta Chain, Chain D, domain 3"/>
    <property type="match status" value="1"/>
</dbReference>
<dbReference type="Gene3D" id="3.40.50.300">
    <property type="entry name" value="P-loop containing nucleotide triphosphate hydrolases"/>
    <property type="match status" value="1"/>
</dbReference>
<dbReference type="HAMAP" id="MF_01347">
    <property type="entry name" value="ATP_synth_beta_bact"/>
    <property type="match status" value="1"/>
</dbReference>
<dbReference type="InterPro" id="IPR003593">
    <property type="entry name" value="AAA+_ATPase"/>
</dbReference>
<dbReference type="InterPro" id="IPR055190">
    <property type="entry name" value="ATP-synt_VA_C"/>
</dbReference>
<dbReference type="InterPro" id="IPR005722">
    <property type="entry name" value="ATP_synth_F1_bsu"/>
</dbReference>
<dbReference type="InterPro" id="IPR020003">
    <property type="entry name" value="ATPase_a/bsu_AS"/>
</dbReference>
<dbReference type="InterPro" id="IPR050053">
    <property type="entry name" value="ATPase_alpha/beta_chains"/>
</dbReference>
<dbReference type="InterPro" id="IPR004100">
    <property type="entry name" value="ATPase_F1/V1/A1_a/bsu_N"/>
</dbReference>
<dbReference type="InterPro" id="IPR036121">
    <property type="entry name" value="ATPase_F1/V1/A1_a/bsu_N_sf"/>
</dbReference>
<dbReference type="InterPro" id="IPR000194">
    <property type="entry name" value="ATPase_F1/V1/A1_a/bsu_nucl-bd"/>
</dbReference>
<dbReference type="InterPro" id="IPR024034">
    <property type="entry name" value="ATPase_F1/V1_b/a_C"/>
</dbReference>
<dbReference type="InterPro" id="IPR027417">
    <property type="entry name" value="P-loop_NTPase"/>
</dbReference>
<dbReference type="NCBIfam" id="TIGR01039">
    <property type="entry name" value="atpD"/>
    <property type="match status" value="1"/>
</dbReference>
<dbReference type="PANTHER" id="PTHR15184">
    <property type="entry name" value="ATP SYNTHASE"/>
    <property type="match status" value="1"/>
</dbReference>
<dbReference type="PANTHER" id="PTHR15184:SF71">
    <property type="entry name" value="ATP SYNTHASE SUBUNIT BETA, MITOCHONDRIAL"/>
    <property type="match status" value="1"/>
</dbReference>
<dbReference type="Pfam" id="PF00006">
    <property type="entry name" value="ATP-synt_ab"/>
    <property type="match status" value="1"/>
</dbReference>
<dbReference type="Pfam" id="PF02874">
    <property type="entry name" value="ATP-synt_ab_N"/>
    <property type="match status" value="1"/>
</dbReference>
<dbReference type="Pfam" id="PF22919">
    <property type="entry name" value="ATP-synt_VA_C"/>
    <property type="match status" value="1"/>
</dbReference>
<dbReference type="PIRSF" id="PIRSF039072">
    <property type="entry name" value="ATPase_subunit_beta"/>
    <property type="match status" value="1"/>
</dbReference>
<dbReference type="SMART" id="SM00382">
    <property type="entry name" value="AAA"/>
    <property type="match status" value="1"/>
</dbReference>
<dbReference type="SUPFAM" id="SSF47917">
    <property type="entry name" value="C-terminal domain of alpha and beta subunits of F1 ATP synthase"/>
    <property type="match status" value="1"/>
</dbReference>
<dbReference type="SUPFAM" id="SSF50615">
    <property type="entry name" value="N-terminal domain of alpha and beta subunits of F1 ATP synthase"/>
    <property type="match status" value="1"/>
</dbReference>
<dbReference type="SUPFAM" id="SSF52540">
    <property type="entry name" value="P-loop containing nucleoside triphosphate hydrolases"/>
    <property type="match status" value="1"/>
</dbReference>
<dbReference type="PROSITE" id="PS00152">
    <property type="entry name" value="ATPASE_ALPHA_BETA"/>
    <property type="match status" value="1"/>
</dbReference>
<name>ATPB_RHIEC</name>
<gene>
    <name evidence="1" type="primary">atpD</name>
    <name type="ordered locus">RHE_CH03870</name>
</gene>
<reference key="1">
    <citation type="journal article" date="2006" name="Proc. Natl. Acad. Sci. U.S.A.">
        <title>The partitioned Rhizobium etli genome: genetic and metabolic redundancy in seven interacting replicons.</title>
        <authorList>
            <person name="Gonzalez V."/>
            <person name="Santamaria R.I."/>
            <person name="Bustos P."/>
            <person name="Hernandez-Gonzalez I."/>
            <person name="Medrano-Soto A."/>
            <person name="Moreno-Hagelsieb G."/>
            <person name="Janga S.C."/>
            <person name="Ramirez M.A."/>
            <person name="Jimenez-Jacinto V."/>
            <person name="Collado-Vides J."/>
            <person name="Davila G."/>
        </authorList>
    </citation>
    <scope>NUCLEOTIDE SEQUENCE [LARGE SCALE GENOMIC DNA]</scope>
    <source>
        <strain>ATCC 51251 / DSM 11541 / JCM 21823 / NBRC 15573 / CFN 42</strain>
    </source>
</reference>
<evidence type="ECO:0000255" key="1">
    <source>
        <dbReference type="HAMAP-Rule" id="MF_01347"/>
    </source>
</evidence>
<keyword id="KW-0066">ATP synthesis</keyword>
<keyword id="KW-0067">ATP-binding</keyword>
<keyword id="KW-0997">Cell inner membrane</keyword>
<keyword id="KW-1003">Cell membrane</keyword>
<keyword id="KW-0139">CF(1)</keyword>
<keyword id="KW-0375">Hydrogen ion transport</keyword>
<keyword id="KW-0406">Ion transport</keyword>
<keyword id="KW-0472">Membrane</keyword>
<keyword id="KW-0547">Nucleotide-binding</keyword>
<keyword id="KW-1185">Reference proteome</keyword>
<keyword id="KW-1278">Translocase</keyword>
<keyword id="KW-0813">Transport</keyword>
<feature type="chain" id="PRO_0000254350" description="ATP synthase subunit beta">
    <location>
        <begin position="1"/>
        <end position="475"/>
    </location>
</feature>
<feature type="binding site" evidence="1">
    <location>
        <begin position="155"/>
        <end position="162"/>
    </location>
    <ligand>
        <name>ATP</name>
        <dbReference type="ChEBI" id="CHEBI:30616"/>
    </ligand>
</feature>